<proteinExistence type="inferred from homology"/>
<keyword id="KW-0408">Iron</keyword>
<keyword id="KW-0411">Iron-sulfur</keyword>
<keyword id="KW-0479">Metal-binding</keyword>
<dbReference type="EMBL" id="CP000947">
    <property type="protein sequence ID" value="ACA31027.1"/>
    <property type="molecule type" value="Genomic_DNA"/>
</dbReference>
<dbReference type="RefSeq" id="WP_012340453.1">
    <property type="nucleotide sequence ID" value="NC_010519.1"/>
</dbReference>
<dbReference type="SMR" id="B0UU19"/>
<dbReference type="STRING" id="228400.HSM_1296"/>
<dbReference type="GeneID" id="31487599"/>
<dbReference type="KEGG" id="hsm:HSM_1296"/>
<dbReference type="HOGENOM" id="CLU_069054_5_3_6"/>
<dbReference type="GO" id="GO:0005829">
    <property type="term" value="C:cytosol"/>
    <property type="evidence" value="ECO:0007669"/>
    <property type="project" value="TreeGrafter"/>
</dbReference>
<dbReference type="GO" id="GO:0051537">
    <property type="term" value="F:2 iron, 2 sulfur cluster binding"/>
    <property type="evidence" value="ECO:0007669"/>
    <property type="project" value="TreeGrafter"/>
</dbReference>
<dbReference type="GO" id="GO:0051539">
    <property type="term" value="F:4 iron, 4 sulfur cluster binding"/>
    <property type="evidence" value="ECO:0007669"/>
    <property type="project" value="TreeGrafter"/>
</dbReference>
<dbReference type="GO" id="GO:0005506">
    <property type="term" value="F:iron ion binding"/>
    <property type="evidence" value="ECO:0007669"/>
    <property type="project" value="UniProtKB-UniRule"/>
</dbReference>
<dbReference type="GO" id="GO:0016226">
    <property type="term" value="P:iron-sulfur cluster assembly"/>
    <property type="evidence" value="ECO:0007669"/>
    <property type="project" value="UniProtKB-UniRule"/>
</dbReference>
<dbReference type="FunFam" id="2.60.300.12:FF:000002">
    <property type="entry name" value="Iron-sulfur cluster insertion protein ErpA"/>
    <property type="match status" value="1"/>
</dbReference>
<dbReference type="Gene3D" id="2.60.300.12">
    <property type="entry name" value="HesB-like domain"/>
    <property type="match status" value="1"/>
</dbReference>
<dbReference type="HAMAP" id="MF_01380">
    <property type="entry name" value="Fe_S_insert_ErpA"/>
    <property type="match status" value="1"/>
</dbReference>
<dbReference type="InterPro" id="IPR000361">
    <property type="entry name" value="FeS_biogenesis"/>
</dbReference>
<dbReference type="InterPro" id="IPR016092">
    <property type="entry name" value="FeS_cluster_insertion"/>
</dbReference>
<dbReference type="InterPro" id="IPR017870">
    <property type="entry name" value="FeS_cluster_insertion_CS"/>
</dbReference>
<dbReference type="InterPro" id="IPR023063">
    <property type="entry name" value="FeS_cluster_insertion_RrpA"/>
</dbReference>
<dbReference type="InterPro" id="IPR035903">
    <property type="entry name" value="HesB-like_dom_sf"/>
</dbReference>
<dbReference type="NCBIfam" id="TIGR00049">
    <property type="entry name" value="iron-sulfur cluster assembly accessory protein"/>
    <property type="match status" value="1"/>
</dbReference>
<dbReference type="NCBIfam" id="NF010147">
    <property type="entry name" value="PRK13623.1"/>
    <property type="match status" value="1"/>
</dbReference>
<dbReference type="PANTHER" id="PTHR43011">
    <property type="entry name" value="IRON-SULFUR CLUSTER ASSEMBLY 2 HOMOLOG, MITOCHONDRIAL"/>
    <property type="match status" value="1"/>
</dbReference>
<dbReference type="PANTHER" id="PTHR43011:SF1">
    <property type="entry name" value="IRON-SULFUR CLUSTER ASSEMBLY 2 HOMOLOG, MITOCHONDRIAL"/>
    <property type="match status" value="1"/>
</dbReference>
<dbReference type="Pfam" id="PF01521">
    <property type="entry name" value="Fe-S_biosyn"/>
    <property type="match status" value="1"/>
</dbReference>
<dbReference type="SUPFAM" id="SSF89360">
    <property type="entry name" value="HesB-like domain"/>
    <property type="match status" value="1"/>
</dbReference>
<dbReference type="PROSITE" id="PS01152">
    <property type="entry name" value="HESB"/>
    <property type="match status" value="1"/>
</dbReference>
<feature type="chain" id="PRO_1000087299" description="Iron-sulfur cluster insertion protein ErpA">
    <location>
        <begin position="1"/>
        <end position="113"/>
    </location>
</feature>
<feature type="binding site" evidence="1">
    <location>
        <position position="41"/>
    </location>
    <ligand>
        <name>iron-sulfur cluster</name>
        <dbReference type="ChEBI" id="CHEBI:30408"/>
    </ligand>
</feature>
<feature type="binding site" evidence="1">
    <location>
        <position position="105"/>
    </location>
    <ligand>
        <name>iron-sulfur cluster</name>
        <dbReference type="ChEBI" id="CHEBI:30408"/>
    </ligand>
</feature>
<feature type="binding site" evidence="1">
    <location>
        <position position="107"/>
    </location>
    <ligand>
        <name>iron-sulfur cluster</name>
        <dbReference type="ChEBI" id="CHEBI:30408"/>
    </ligand>
</feature>
<protein>
    <recommendedName>
        <fullName evidence="1">Iron-sulfur cluster insertion protein ErpA</fullName>
    </recommendedName>
</protein>
<name>ERPA_HISS2</name>
<comment type="function">
    <text evidence="1">Required for insertion of 4Fe-4S clusters for at least IspG.</text>
</comment>
<comment type="cofactor">
    <cofactor evidence="1">
        <name>iron-sulfur cluster</name>
        <dbReference type="ChEBI" id="CHEBI:30408"/>
    </cofactor>
    <text evidence="1">Binds 1 iron-sulfur cluster per subunit.</text>
</comment>
<comment type="subunit">
    <text evidence="1">Homodimer.</text>
</comment>
<comment type="similarity">
    <text evidence="1">Belongs to the HesB/IscA family.</text>
</comment>
<accession>B0UU19</accession>
<sequence>MADIAVPLTFTDAAANKVKTLISEEENTELKLRVYITGGGCSGFQYGFTFDEKTNDGDLIVENSGVKLVVDPMSLQYLVGGTVDYTEGLEGSRFIVNNPNASTTCGCGSSFSI</sequence>
<reference key="1">
    <citation type="submission" date="2008-02" db="EMBL/GenBank/DDBJ databases">
        <title>Complete sequence of Haemophilus somnus 2336.</title>
        <authorList>
            <consortium name="US DOE Joint Genome Institute"/>
            <person name="Siddaramappa S."/>
            <person name="Duncan A.J."/>
            <person name="Challacombe J.F."/>
            <person name="Rainey D."/>
            <person name="Gillaspy A.F."/>
            <person name="Carson M."/>
            <person name="Gipson J."/>
            <person name="Gipson M."/>
            <person name="Bruce D."/>
            <person name="Detter J.C."/>
            <person name="Han C.S."/>
            <person name="Land M."/>
            <person name="Tapia R."/>
            <person name="Thompson L.S."/>
            <person name="Orvis J."/>
            <person name="Zaitshik J."/>
            <person name="Barnes G."/>
            <person name="Brettin T.S."/>
            <person name="Dyer D.W."/>
            <person name="Inzana T.J."/>
        </authorList>
    </citation>
    <scope>NUCLEOTIDE SEQUENCE [LARGE SCALE GENOMIC DNA]</scope>
    <source>
        <strain>2336</strain>
    </source>
</reference>
<evidence type="ECO:0000255" key="1">
    <source>
        <dbReference type="HAMAP-Rule" id="MF_01380"/>
    </source>
</evidence>
<organism>
    <name type="scientific">Histophilus somni (strain 2336)</name>
    <name type="common">Haemophilus somnus</name>
    <dbReference type="NCBI Taxonomy" id="228400"/>
    <lineage>
        <taxon>Bacteria</taxon>
        <taxon>Pseudomonadati</taxon>
        <taxon>Pseudomonadota</taxon>
        <taxon>Gammaproteobacteria</taxon>
        <taxon>Pasteurellales</taxon>
        <taxon>Pasteurellaceae</taxon>
        <taxon>Histophilus</taxon>
    </lineage>
</organism>
<gene>
    <name evidence="1" type="primary">erpA</name>
    <name type="ordered locus">HSM_1296</name>
</gene>